<feature type="chain" id="PRO_1000023909" description="Uroporphyrinogen decarboxylase">
    <location>
        <begin position="1"/>
        <end position="341"/>
    </location>
</feature>
<feature type="binding site" evidence="1">
    <location>
        <begin position="25"/>
        <end position="29"/>
    </location>
    <ligand>
        <name>substrate</name>
    </ligand>
</feature>
<feature type="binding site" evidence="1">
    <location>
        <position position="44"/>
    </location>
    <ligand>
        <name>substrate</name>
    </ligand>
</feature>
<feature type="binding site" evidence="1">
    <location>
        <position position="74"/>
    </location>
    <ligand>
        <name>substrate</name>
    </ligand>
</feature>
<feature type="binding site" evidence="1">
    <location>
        <position position="151"/>
    </location>
    <ligand>
        <name>substrate</name>
    </ligand>
</feature>
<feature type="binding site" evidence="1">
    <location>
        <position position="206"/>
    </location>
    <ligand>
        <name>substrate</name>
    </ligand>
</feature>
<feature type="binding site" evidence="1">
    <location>
        <position position="318"/>
    </location>
    <ligand>
        <name>substrate</name>
    </ligand>
</feature>
<feature type="site" description="Transition state stabilizer" evidence="1">
    <location>
        <position position="74"/>
    </location>
</feature>
<evidence type="ECO:0000255" key="1">
    <source>
        <dbReference type="HAMAP-Rule" id="MF_00218"/>
    </source>
</evidence>
<accession>A0M6C4</accession>
<comment type="function">
    <text evidence="1">Catalyzes the decarboxylation of four acetate groups of uroporphyrinogen-III to yield coproporphyrinogen-III.</text>
</comment>
<comment type="catalytic activity">
    <reaction evidence="1">
        <text>uroporphyrinogen III + 4 H(+) = coproporphyrinogen III + 4 CO2</text>
        <dbReference type="Rhea" id="RHEA:19865"/>
        <dbReference type="ChEBI" id="CHEBI:15378"/>
        <dbReference type="ChEBI" id="CHEBI:16526"/>
        <dbReference type="ChEBI" id="CHEBI:57308"/>
        <dbReference type="ChEBI" id="CHEBI:57309"/>
        <dbReference type="EC" id="4.1.1.37"/>
    </reaction>
</comment>
<comment type="pathway">
    <text evidence="1">Porphyrin-containing compound metabolism; protoporphyrin-IX biosynthesis; coproporphyrinogen-III from 5-aminolevulinate: step 4/4.</text>
</comment>
<comment type="subunit">
    <text evidence="1">Homodimer.</text>
</comment>
<comment type="subcellular location">
    <subcellularLocation>
        <location evidence="1">Cytoplasm</location>
    </subcellularLocation>
</comment>
<comment type="similarity">
    <text evidence="1">Belongs to the uroporphyrinogen decarboxylase family.</text>
</comment>
<gene>
    <name evidence="1" type="primary">hemE</name>
    <name type="ordered locus">GFO_3226</name>
</gene>
<dbReference type="EC" id="4.1.1.37" evidence="1"/>
<dbReference type="EMBL" id="CU207366">
    <property type="protein sequence ID" value="CAL68169.1"/>
    <property type="molecule type" value="Genomic_DNA"/>
</dbReference>
<dbReference type="RefSeq" id="WP_011711070.1">
    <property type="nucleotide sequence ID" value="NC_008571.1"/>
</dbReference>
<dbReference type="SMR" id="A0M6C4"/>
<dbReference type="STRING" id="411154.GFO_3226"/>
<dbReference type="KEGG" id="gfo:GFO_3226"/>
<dbReference type="eggNOG" id="COG0407">
    <property type="taxonomic scope" value="Bacteria"/>
</dbReference>
<dbReference type="HOGENOM" id="CLU_040933_0_0_10"/>
<dbReference type="OrthoDB" id="9806656at2"/>
<dbReference type="UniPathway" id="UPA00251">
    <property type="reaction ID" value="UER00321"/>
</dbReference>
<dbReference type="Proteomes" id="UP000000755">
    <property type="component" value="Chromosome"/>
</dbReference>
<dbReference type="GO" id="GO:0005829">
    <property type="term" value="C:cytosol"/>
    <property type="evidence" value="ECO:0007669"/>
    <property type="project" value="TreeGrafter"/>
</dbReference>
<dbReference type="GO" id="GO:0004853">
    <property type="term" value="F:uroporphyrinogen decarboxylase activity"/>
    <property type="evidence" value="ECO:0007669"/>
    <property type="project" value="UniProtKB-UniRule"/>
</dbReference>
<dbReference type="GO" id="GO:0006782">
    <property type="term" value="P:protoporphyrinogen IX biosynthetic process"/>
    <property type="evidence" value="ECO:0007669"/>
    <property type="project" value="UniProtKB-UniRule"/>
</dbReference>
<dbReference type="CDD" id="cd00717">
    <property type="entry name" value="URO-D"/>
    <property type="match status" value="1"/>
</dbReference>
<dbReference type="FunFam" id="3.20.20.210:FF:000008">
    <property type="entry name" value="Uroporphyrinogen decarboxylase"/>
    <property type="match status" value="1"/>
</dbReference>
<dbReference type="Gene3D" id="3.20.20.210">
    <property type="match status" value="1"/>
</dbReference>
<dbReference type="HAMAP" id="MF_00218">
    <property type="entry name" value="URO_D"/>
    <property type="match status" value="1"/>
</dbReference>
<dbReference type="InterPro" id="IPR038071">
    <property type="entry name" value="UROD/MetE-like_sf"/>
</dbReference>
<dbReference type="InterPro" id="IPR006361">
    <property type="entry name" value="Uroporphyrinogen_deCO2ase_HemE"/>
</dbReference>
<dbReference type="InterPro" id="IPR000257">
    <property type="entry name" value="Uroporphyrinogen_deCOase"/>
</dbReference>
<dbReference type="NCBIfam" id="TIGR01464">
    <property type="entry name" value="hemE"/>
    <property type="match status" value="1"/>
</dbReference>
<dbReference type="PANTHER" id="PTHR21091">
    <property type="entry name" value="METHYLTETRAHYDROFOLATE:HOMOCYSTEINE METHYLTRANSFERASE RELATED"/>
    <property type="match status" value="1"/>
</dbReference>
<dbReference type="PANTHER" id="PTHR21091:SF169">
    <property type="entry name" value="UROPORPHYRINOGEN DECARBOXYLASE"/>
    <property type="match status" value="1"/>
</dbReference>
<dbReference type="Pfam" id="PF01208">
    <property type="entry name" value="URO-D"/>
    <property type="match status" value="1"/>
</dbReference>
<dbReference type="SUPFAM" id="SSF51726">
    <property type="entry name" value="UROD/MetE-like"/>
    <property type="match status" value="1"/>
</dbReference>
<dbReference type="PROSITE" id="PS00906">
    <property type="entry name" value="UROD_1"/>
    <property type="match status" value="1"/>
</dbReference>
<keyword id="KW-0963">Cytoplasm</keyword>
<keyword id="KW-0210">Decarboxylase</keyword>
<keyword id="KW-0456">Lyase</keyword>
<keyword id="KW-0627">Porphyrin biosynthesis</keyword>
<protein>
    <recommendedName>
        <fullName evidence="1">Uroporphyrinogen decarboxylase</fullName>
        <shortName evidence="1">UPD</shortName>
        <shortName evidence="1">URO-D</shortName>
        <ecNumber evidence="1">4.1.1.37</ecNumber>
    </recommendedName>
</protein>
<organism>
    <name type="scientific">Christiangramia forsetii (strain DSM 17595 / CGMCC 1.15422 / KT0803)</name>
    <name type="common">Gramella forsetii</name>
    <dbReference type="NCBI Taxonomy" id="411154"/>
    <lineage>
        <taxon>Bacteria</taxon>
        <taxon>Pseudomonadati</taxon>
        <taxon>Bacteroidota</taxon>
        <taxon>Flavobacteriia</taxon>
        <taxon>Flavobacteriales</taxon>
        <taxon>Flavobacteriaceae</taxon>
        <taxon>Christiangramia</taxon>
    </lineage>
</organism>
<proteinExistence type="inferred from homology"/>
<reference key="1">
    <citation type="journal article" date="2006" name="Environ. Microbiol.">
        <title>Whole genome analysis of the marine Bacteroidetes'Gramella forsetii' reveals adaptations to degradation of polymeric organic matter.</title>
        <authorList>
            <person name="Bauer M."/>
            <person name="Kube M."/>
            <person name="Teeling H."/>
            <person name="Richter M."/>
            <person name="Lombardot T."/>
            <person name="Allers E."/>
            <person name="Wuerdemann C.A."/>
            <person name="Quast C."/>
            <person name="Kuhl H."/>
            <person name="Knaust F."/>
            <person name="Woebken D."/>
            <person name="Bischof K."/>
            <person name="Mussmann M."/>
            <person name="Choudhuri J.V."/>
            <person name="Meyer F."/>
            <person name="Reinhardt R."/>
            <person name="Amann R.I."/>
            <person name="Gloeckner F.O."/>
        </authorList>
    </citation>
    <scope>NUCLEOTIDE SEQUENCE [LARGE SCALE GENOMIC DNA]</scope>
    <source>
        <strain>DSM 17595 / CGMCC 1.15422 / KT0803</strain>
    </source>
</reference>
<name>DCUP_CHRFK</name>
<sequence>MIKNDLLLKALKGESVERPPVWMMRQAGRYLPDFMKLKEKYDFFTRCRTPELATEITVMPIRQIGPDAAILFSDILVVPQAMNIEVEMKPGVGPWLPNPIDSPKKVEQVIVPDVNEELGYVFEAIKMTKQELNDEVPLIGFAGSPWTILCYCVQGQGSKTFDKAKRFCFMNPIAAHTLLQKITDTTIAYLKEKVKAGVDAVQLFDSWGGLLEPKDYQEFSWKYMQQIIEALKDEVPVIAYGKGCWFALDKMAKSGAAALGVDWTCEARNARYLSGGEITLQGNFDPARLYSKPIEIKYMVNDMIKAFGKDRYIANLGHGILPNIPVDNAKAFVDAVKEYKE</sequence>